<organism>
    <name type="scientific">Drosophila persimilis</name>
    <name type="common">Fruit fly</name>
    <dbReference type="NCBI Taxonomy" id="7234"/>
    <lineage>
        <taxon>Eukaryota</taxon>
        <taxon>Metazoa</taxon>
        <taxon>Ecdysozoa</taxon>
        <taxon>Arthropoda</taxon>
        <taxon>Hexapoda</taxon>
        <taxon>Insecta</taxon>
        <taxon>Pterygota</taxon>
        <taxon>Neoptera</taxon>
        <taxon>Endopterygota</taxon>
        <taxon>Diptera</taxon>
        <taxon>Brachycera</taxon>
        <taxon>Muscomorpha</taxon>
        <taxon>Ephydroidea</taxon>
        <taxon>Drosophilidae</taxon>
        <taxon>Drosophila</taxon>
        <taxon>Sophophora</taxon>
    </lineage>
</organism>
<name>KTU_DROPE</name>
<evidence type="ECO:0000250" key="1">
    <source>
        <dbReference type="UniProtKB" id="Q0E9G3"/>
    </source>
</evidence>
<evidence type="ECO:0000255" key="2">
    <source>
        <dbReference type="HAMAP-Rule" id="MF_03069"/>
    </source>
</evidence>
<evidence type="ECO:0000256" key="3">
    <source>
        <dbReference type="SAM" id="MobiDB-lite"/>
    </source>
</evidence>
<sequence>MSTAAGSRKKHSKLHNEERADITKDEFEAIREALSKEEFRKLFFDYVEEVQDPENRKIYEQEITQLEKERGVDIKFVHPKPGFVVKTSIDGELKCFINIASSPEVARPNSEVGMNPETGGRGLSWSIPMAQTGGRDDCDAKNNHCKVFDVVFHPDALHLSTRDSQFRKALIDTALDAVEREYEVALDRANLKYPKLDYKGIARPTVIRKLAANPTPEEQEPHPLEHMYPTKPPASNSEPKILPMKTKAAPVPEFAVPKYSIKQSHDVDLSEYTDELDAKLHVTVPRSLVVEIELPLLRSTAECQLDVTAKSVYLLSERLGAKYRLKLDLPFVVDDKAGNARFDTEKRRLSITLPVVRKSVNQQRQMHDTLRYLSREDSGVELHSNSESPVEDDADGDMPETPELETAAPPDPPALTPSTFLKDSVHYQLPKFDCNALDNAMAFVLDVAHVQPDSIVTLKTDRSVSVKFATIGSGYYPTHYAFYMELPSVDMEEYHKDHCIESIEAEAWDNNVIMKLFLGAESKAPTSYLAGLHANGLKEYQVYGHYKAKTDKNNECEPNPPRVVQIMRTDDAVVITVRPPHTSITTEEDDEQQQQLHKKPSKKQRKRNKKQRSYSESACEEMLDQQDGPLGRKKDATTPMVPQRKQRSYSECNDSTIGSENVNRGILKRFSRYGPRPSMSDSCSSIDDCGFSSHSCSVDASSSLFSQSFNGIPEEDRTEEGLSESCKKTVRFNDQIMKQVFRHDSSILGQRKKNQKRRNCKLRAQQRRLSEGDSADYEETRDTALKQQGEPSGNKLHDSGLDLTGASASHRTDNNSKSYRTRQDHADADAKNDAMMFEMDDEDDEI</sequence>
<accession>B4GDK5</accession>
<reference key="1">
    <citation type="journal article" date="2007" name="Nature">
        <title>Evolution of genes and genomes on the Drosophila phylogeny.</title>
        <authorList>
            <consortium name="Drosophila 12 genomes consortium"/>
        </authorList>
    </citation>
    <scope>NUCLEOTIDE SEQUENCE [LARGE SCALE GENOMIC DNA]</scope>
    <source>
        <strain>MSH-3 / Tucson 14011-0111.49</strain>
    </source>
</reference>
<feature type="chain" id="PRO_0000365809" description="Protein kintoun">
    <location>
        <begin position="1"/>
        <end position="846"/>
    </location>
</feature>
<feature type="region of interest" description="Disordered" evidence="3">
    <location>
        <begin position="1"/>
        <end position="21"/>
    </location>
</feature>
<feature type="region of interest" description="Disordered" evidence="3">
    <location>
        <begin position="372"/>
        <end position="416"/>
    </location>
</feature>
<feature type="region of interest" description="Disordered" evidence="3">
    <location>
        <begin position="581"/>
        <end position="657"/>
    </location>
</feature>
<feature type="region of interest" description="Disordered" evidence="3">
    <location>
        <begin position="743"/>
        <end position="846"/>
    </location>
</feature>
<feature type="compositionally biased region" description="Acidic residues" evidence="3">
    <location>
        <begin position="389"/>
        <end position="403"/>
    </location>
</feature>
<feature type="compositionally biased region" description="Basic residues" evidence="3">
    <location>
        <begin position="596"/>
        <end position="612"/>
    </location>
</feature>
<feature type="compositionally biased region" description="Basic residues" evidence="3">
    <location>
        <begin position="750"/>
        <end position="766"/>
    </location>
</feature>
<feature type="compositionally biased region" description="Basic and acidic residues" evidence="3">
    <location>
        <begin position="821"/>
        <end position="832"/>
    </location>
</feature>
<feature type="modified residue" description="Phosphoserine" evidence="1">
    <location>
        <position position="378"/>
    </location>
</feature>
<feature type="modified residue" description="Phosphoserine" evidence="1">
    <location>
        <position position="770"/>
    </location>
</feature>
<dbReference type="EMBL" id="CH479181">
    <property type="protein sequence ID" value="EDW31662.1"/>
    <property type="molecule type" value="Genomic_DNA"/>
</dbReference>
<dbReference type="SMR" id="B4GDK5"/>
<dbReference type="STRING" id="7234.B4GDK5"/>
<dbReference type="EnsemblMetazoa" id="FBtr0176856">
    <property type="protein sequence ID" value="FBpp0175348"/>
    <property type="gene ID" value="FBgn0148850"/>
</dbReference>
<dbReference type="EnsemblMetazoa" id="XM_002015736.2">
    <property type="protein sequence ID" value="XP_002015772.1"/>
    <property type="gene ID" value="LOC6590840"/>
</dbReference>
<dbReference type="GeneID" id="6590840"/>
<dbReference type="KEGG" id="dpe:6590840"/>
<dbReference type="eggNOG" id="KOG4356">
    <property type="taxonomic scope" value="Eukaryota"/>
</dbReference>
<dbReference type="HOGENOM" id="CLU_012715_0_0_1"/>
<dbReference type="OMA" id="CFLNISK"/>
<dbReference type="OrthoDB" id="546764at2759"/>
<dbReference type="PhylomeDB" id="B4GDK5"/>
<dbReference type="Proteomes" id="UP000008744">
    <property type="component" value="Unassembled WGS sequence"/>
</dbReference>
<dbReference type="GO" id="GO:0005737">
    <property type="term" value="C:cytoplasm"/>
    <property type="evidence" value="ECO:0007669"/>
    <property type="project" value="UniProtKB-SubCell"/>
</dbReference>
<dbReference type="GO" id="GO:0008157">
    <property type="term" value="F:protein phosphatase 1 binding"/>
    <property type="evidence" value="ECO:0007669"/>
    <property type="project" value="EnsemblMetazoa"/>
</dbReference>
<dbReference type="GO" id="GO:0070286">
    <property type="term" value="P:axonemal dynein complex assembly"/>
    <property type="evidence" value="ECO:0007669"/>
    <property type="project" value="UniProtKB-UniRule"/>
</dbReference>
<dbReference type="GO" id="GO:0060285">
    <property type="term" value="P:cilium-dependent cell motility"/>
    <property type="evidence" value="ECO:0007669"/>
    <property type="project" value="UniProtKB-UniRule"/>
</dbReference>
<dbReference type="HAMAP" id="MF_03069">
    <property type="entry name" value="Kintoun"/>
    <property type="match status" value="1"/>
</dbReference>
<dbReference type="InterPro" id="IPR034727">
    <property type="entry name" value="Kintoun"/>
</dbReference>
<dbReference type="InterPro" id="IPR050734">
    <property type="entry name" value="PIH1/Kintoun_subfamily"/>
</dbReference>
<dbReference type="InterPro" id="IPR012981">
    <property type="entry name" value="PIH1_N"/>
</dbReference>
<dbReference type="InterPro" id="IPR041442">
    <property type="entry name" value="PIH1D1/2/3_CS-like"/>
</dbReference>
<dbReference type="PANTHER" id="PTHR22997">
    <property type="entry name" value="PIH1 DOMAIN-CONTAINING PROTEIN 1"/>
    <property type="match status" value="1"/>
</dbReference>
<dbReference type="PANTHER" id="PTHR22997:SF3">
    <property type="entry name" value="PROTEIN KINTOUN"/>
    <property type="match status" value="1"/>
</dbReference>
<dbReference type="Pfam" id="PF08190">
    <property type="entry name" value="PIH1"/>
    <property type="match status" value="1"/>
</dbReference>
<dbReference type="Pfam" id="PF18201">
    <property type="entry name" value="PIH1_CS"/>
    <property type="match status" value="1"/>
</dbReference>
<protein>
    <recommendedName>
        <fullName evidence="2">Protein kintoun</fullName>
    </recommendedName>
    <alternativeName>
        <fullName evidence="2">Dynein assembly factor 2, axonemal homolog</fullName>
    </alternativeName>
    <alternativeName>
        <fullName evidence="2">PP1-interacting protein 20</fullName>
    </alternativeName>
</protein>
<comment type="function">
    <text evidence="2">Required for cytoplasmic pre-assembly of axonemal dyneins, thereby playing a central role in motility in cilia and flagella. Involved in pre-assembly of dynein arm complexes in the cytoplasm before intraflagellar transport loads them for the ciliary compartment.</text>
</comment>
<comment type="subunit">
    <text evidence="2">Interacts with Pp1alpha-96A, Pp1-87B, Pp1-13C and flw.</text>
</comment>
<comment type="subcellular location">
    <subcellularLocation>
        <location evidence="2">Cytoplasm</location>
    </subcellularLocation>
</comment>
<comment type="similarity">
    <text evidence="2">Belongs to the PIH1 family. Kintoun subfamily.</text>
</comment>
<gene>
    <name evidence="2" type="primary">Nop17l</name>
    <name evidence="2" type="synonym">Ppi20</name>
    <name type="ORF">GL11241</name>
</gene>
<proteinExistence type="inferred from homology"/>
<keyword id="KW-0963">Cytoplasm</keyword>
<keyword id="KW-0597">Phosphoprotein</keyword>
<keyword id="KW-1185">Reference proteome</keyword>